<gene>
    <name evidence="1" type="primary">folD</name>
    <name type="ordered locus">BC_4180</name>
</gene>
<reference key="1">
    <citation type="journal article" date="2003" name="Nature">
        <title>Genome sequence of Bacillus cereus and comparative analysis with Bacillus anthracis.</title>
        <authorList>
            <person name="Ivanova N."/>
            <person name="Sorokin A."/>
            <person name="Anderson I."/>
            <person name="Galleron N."/>
            <person name="Candelon B."/>
            <person name="Kapatral V."/>
            <person name="Bhattacharyya A."/>
            <person name="Reznik G."/>
            <person name="Mikhailova N."/>
            <person name="Lapidus A."/>
            <person name="Chu L."/>
            <person name="Mazur M."/>
            <person name="Goltsman E."/>
            <person name="Larsen N."/>
            <person name="D'Souza M."/>
            <person name="Walunas T."/>
            <person name="Grechkin Y."/>
            <person name="Pusch G."/>
            <person name="Haselkorn R."/>
            <person name="Fonstein M."/>
            <person name="Ehrlich S.D."/>
            <person name="Overbeek R."/>
            <person name="Kyrpides N.C."/>
        </authorList>
    </citation>
    <scope>NUCLEOTIDE SEQUENCE [LARGE SCALE GENOMIC DNA]</scope>
    <source>
        <strain>ATCC 14579 / DSM 31 / CCUG 7414 / JCM 2152 / NBRC 15305 / NCIMB 9373 / NCTC 2599 / NRRL B-3711</strain>
    </source>
</reference>
<dbReference type="EC" id="1.5.1.5" evidence="1"/>
<dbReference type="EC" id="3.5.4.9" evidence="1"/>
<dbReference type="EMBL" id="AE016877">
    <property type="protein sequence ID" value="AAP11095.1"/>
    <property type="molecule type" value="Genomic_DNA"/>
</dbReference>
<dbReference type="RefSeq" id="NP_833894.1">
    <property type="nucleotide sequence ID" value="NC_004722.1"/>
</dbReference>
<dbReference type="RefSeq" id="WP_000226732.1">
    <property type="nucleotide sequence ID" value="NZ_CP138336.1"/>
</dbReference>
<dbReference type="SMR" id="Q818R5"/>
<dbReference type="STRING" id="226900.BC_4180"/>
<dbReference type="GeneID" id="72450864"/>
<dbReference type="KEGG" id="bce:BC4180"/>
<dbReference type="PATRIC" id="fig|226900.8.peg.4320"/>
<dbReference type="HOGENOM" id="CLU_034045_2_1_9"/>
<dbReference type="OrthoDB" id="9803580at2"/>
<dbReference type="UniPathway" id="UPA00193"/>
<dbReference type="Proteomes" id="UP000001417">
    <property type="component" value="Chromosome"/>
</dbReference>
<dbReference type="GO" id="GO:0005829">
    <property type="term" value="C:cytosol"/>
    <property type="evidence" value="ECO:0000318"/>
    <property type="project" value="GO_Central"/>
</dbReference>
<dbReference type="GO" id="GO:0004477">
    <property type="term" value="F:methenyltetrahydrofolate cyclohydrolase activity"/>
    <property type="evidence" value="ECO:0000318"/>
    <property type="project" value="GO_Central"/>
</dbReference>
<dbReference type="GO" id="GO:0004488">
    <property type="term" value="F:methylenetetrahydrofolate dehydrogenase (NADP+) activity"/>
    <property type="evidence" value="ECO:0000318"/>
    <property type="project" value="GO_Central"/>
</dbReference>
<dbReference type="GO" id="GO:0000105">
    <property type="term" value="P:L-histidine biosynthetic process"/>
    <property type="evidence" value="ECO:0007669"/>
    <property type="project" value="UniProtKB-KW"/>
</dbReference>
<dbReference type="GO" id="GO:0009086">
    <property type="term" value="P:methionine biosynthetic process"/>
    <property type="evidence" value="ECO:0007669"/>
    <property type="project" value="UniProtKB-KW"/>
</dbReference>
<dbReference type="GO" id="GO:0006164">
    <property type="term" value="P:purine nucleotide biosynthetic process"/>
    <property type="evidence" value="ECO:0007669"/>
    <property type="project" value="UniProtKB-KW"/>
</dbReference>
<dbReference type="GO" id="GO:0035999">
    <property type="term" value="P:tetrahydrofolate interconversion"/>
    <property type="evidence" value="ECO:0000318"/>
    <property type="project" value="GO_Central"/>
</dbReference>
<dbReference type="CDD" id="cd01080">
    <property type="entry name" value="NAD_bind_m-THF_DH_Cyclohyd"/>
    <property type="match status" value="1"/>
</dbReference>
<dbReference type="FunFam" id="3.40.50.10860:FF:000001">
    <property type="entry name" value="Bifunctional protein FolD"/>
    <property type="match status" value="1"/>
</dbReference>
<dbReference type="FunFam" id="3.40.50.720:FF:000006">
    <property type="entry name" value="Bifunctional protein FolD"/>
    <property type="match status" value="1"/>
</dbReference>
<dbReference type="Gene3D" id="3.40.50.10860">
    <property type="entry name" value="Leucine Dehydrogenase, chain A, domain 1"/>
    <property type="match status" value="1"/>
</dbReference>
<dbReference type="Gene3D" id="3.40.50.720">
    <property type="entry name" value="NAD(P)-binding Rossmann-like Domain"/>
    <property type="match status" value="1"/>
</dbReference>
<dbReference type="HAMAP" id="MF_01576">
    <property type="entry name" value="THF_DHG_CYH"/>
    <property type="match status" value="1"/>
</dbReference>
<dbReference type="InterPro" id="IPR046346">
    <property type="entry name" value="Aminoacid_DH-like_N_sf"/>
</dbReference>
<dbReference type="InterPro" id="IPR036291">
    <property type="entry name" value="NAD(P)-bd_dom_sf"/>
</dbReference>
<dbReference type="InterPro" id="IPR000672">
    <property type="entry name" value="THF_DH/CycHdrlase"/>
</dbReference>
<dbReference type="InterPro" id="IPR020630">
    <property type="entry name" value="THF_DH/CycHdrlase_cat_dom"/>
</dbReference>
<dbReference type="InterPro" id="IPR020867">
    <property type="entry name" value="THF_DH/CycHdrlase_CS"/>
</dbReference>
<dbReference type="InterPro" id="IPR020631">
    <property type="entry name" value="THF_DH/CycHdrlase_NAD-bd_dom"/>
</dbReference>
<dbReference type="NCBIfam" id="NF008058">
    <property type="entry name" value="PRK10792.1"/>
    <property type="match status" value="1"/>
</dbReference>
<dbReference type="NCBIfam" id="NF010783">
    <property type="entry name" value="PRK14186.1"/>
    <property type="match status" value="1"/>
</dbReference>
<dbReference type="PANTHER" id="PTHR48099:SF5">
    <property type="entry name" value="C-1-TETRAHYDROFOLATE SYNTHASE, CYTOPLASMIC"/>
    <property type="match status" value="1"/>
</dbReference>
<dbReference type="PANTHER" id="PTHR48099">
    <property type="entry name" value="C-1-TETRAHYDROFOLATE SYNTHASE, CYTOPLASMIC-RELATED"/>
    <property type="match status" value="1"/>
</dbReference>
<dbReference type="Pfam" id="PF00763">
    <property type="entry name" value="THF_DHG_CYH"/>
    <property type="match status" value="1"/>
</dbReference>
<dbReference type="Pfam" id="PF02882">
    <property type="entry name" value="THF_DHG_CYH_C"/>
    <property type="match status" value="1"/>
</dbReference>
<dbReference type="PRINTS" id="PR00085">
    <property type="entry name" value="THFDHDRGNASE"/>
</dbReference>
<dbReference type="SUPFAM" id="SSF53223">
    <property type="entry name" value="Aminoacid dehydrogenase-like, N-terminal domain"/>
    <property type="match status" value="1"/>
</dbReference>
<dbReference type="SUPFAM" id="SSF51735">
    <property type="entry name" value="NAD(P)-binding Rossmann-fold domains"/>
    <property type="match status" value="1"/>
</dbReference>
<dbReference type="PROSITE" id="PS00767">
    <property type="entry name" value="THF_DHG_CYH_2"/>
    <property type="match status" value="1"/>
</dbReference>
<protein>
    <recommendedName>
        <fullName evidence="1">Bifunctional protein FolD</fullName>
    </recommendedName>
    <domain>
        <recommendedName>
            <fullName evidence="1">Methylenetetrahydrofolate dehydrogenase</fullName>
            <ecNumber evidence="1">1.5.1.5</ecNumber>
        </recommendedName>
    </domain>
    <domain>
        <recommendedName>
            <fullName evidence="1">Methenyltetrahydrofolate cyclohydrolase</fullName>
            <ecNumber evidence="1">3.5.4.9</ecNumber>
        </recommendedName>
    </domain>
</protein>
<proteinExistence type="inferred from homology"/>
<organism>
    <name type="scientific">Bacillus cereus (strain ATCC 14579 / DSM 31 / CCUG 7414 / JCM 2152 / NBRC 15305 / NCIMB 9373 / NCTC 2599 / NRRL B-3711)</name>
    <dbReference type="NCBI Taxonomy" id="226900"/>
    <lineage>
        <taxon>Bacteria</taxon>
        <taxon>Bacillati</taxon>
        <taxon>Bacillota</taxon>
        <taxon>Bacilli</taxon>
        <taxon>Bacillales</taxon>
        <taxon>Bacillaceae</taxon>
        <taxon>Bacillus</taxon>
        <taxon>Bacillus cereus group</taxon>
    </lineage>
</organism>
<feature type="chain" id="PRO_0000268267" description="Bifunctional protein FolD">
    <location>
        <begin position="1"/>
        <end position="286"/>
    </location>
</feature>
<feature type="binding site" evidence="1">
    <location>
        <begin position="165"/>
        <end position="167"/>
    </location>
    <ligand>
        <name>NADP(+)</name>
        <dbReference type="ChEBI" id="CHEBI:58349"/>
    </ligand>
</feature>
<feature type="binding site" evidence="1">
    <location>
        <position position="190"/>
    </location>
    <ligand>
        <name>NADP(+)</name>
        <dbReference type="ChEBI" id="CHEBI:58349"/>
    </ligand>
</feature>
<feature type="binding site" evidence="1">
    <location>
        <position position="231"/>
    </location>
    <ligand>
        <name>NADP(+)</name>
        <dbReference type="ChEBI" id="CHEBI:58349"/>
    </ligand>
</feature>
<keyword id="KW-0028">Amino-acid biosynthesis</keyword>
<keyword id="KW-0368">Histidine biosynthesis</keyword>
<keyword id="KW-0378">Hydrolase</keyword>
<keyword id="KW-0486">Methionine biosynthesis</keyword>
<keyword id="KW-0511">Multifunctional enzyme</keyword>
<keyword id="KW-0521">NADP</keyword>
<keyword id="KW-0554">One-carbon metabolism</keyword>
<keyword id="KW-0560">Oxidoreductase</keyword>
<keyword id="KW-0658">Purine biosynthesis</keyword>
<keyword id="KW-1185">Reference proteome</keyword>
<accession>Q818R5</accession>
<sequence>MVAVIIKGNEVAEKKRAQLTEEVVKLKEQGIVPGLAVILVGEDPASRSYVKGKEKGCEQVGIYSELIELPETITEERLLAEIDRLNGDDRINGILVQLPLPKHIEEKAIIERISPEKDVDGFHPISVGRMMTGQDTFLPCTPHGIVELVKETNLDISGKHVVVIGRSNIVGKPVGQLFLNENATVTYCHSKTQNMKELSKLADILIVAVGRPKMITADYIKEGAVVIDVGVNRLETGKLCGDVDFDNVLDVAGYITPVPKGVGPMTITMLLHNTVESAKRAGVVCK</sequence>
<comment type="function">
    <text evidence="1">Catalyzes the oxidation of 5,10-methylenetetrahydrofolate to 5,10-methenyltetrahydrofolate and then the hydrolysis of 5,10-methenyltetrahydrofolate to 10-formyltetrahydrofolate.</text>
</comment>
<comment type="catalytic activity">
    <reaction evidence="1">
        <text>(6R)-5,10-methylene-5,6,7,8-tetrahydrofolate + NADP(+) = (6R)-5,10-methenyltetrahydrofolate + NADPH</text>
        <dbReference type="Rhea" id="RHEA:22812"/>
        <dbReference type="ChEBI" id="CHEBI:15636"/>
        <dbReference type="ChEBI" id="CHEBI:57455"/>
        <dbReference type="ChEBI" id="CHEBI:57783"/>
        <dbReference type="ChEBI" id="CHEBI:58349"/>
        <dbReference type="EC" id="1.5.1.5"/>
    </reaction>
</comment>
<comment type="catalytic activity">
    <reaction evidence="1">
        <text>(6R)-5,10-methenyltetrahydrofolate + H2O = (6R)-10-formyltetrahydrofolate + H(+)</text>
        <dbReference type="Rhea" id="RHEA:23700"/>
        <dbReference type="ChEBI" id="CHEBI:15377"/>
        <dbReference type="ChEBI" id="CHEBI:15378"/>
        <dbReference type="ChEBI" id="CHEBI:57455"/>
        <dbReference type="ChEBI" id="CHEBI:195366"/>
        <dbReference type="EC" id="3.5.4.9"/>
    </reaction>
</comment>
<comment type="pathway">
    <text evidence="1">One-carbon metabolism; tetrahydrofolate interconversion.</text>
</comment>
<comment type="subunit">
    <text evidence="1">Homodimer.</text>
</comment>
<comment type="similarity">
    <text evidence="1">Belongs to the tetrahydrofolate dehydrogenase/cyclohydrolase family.</text>
</comment>
<evidence type="ECO:0000255" key="1">
    <source>
        <dbReference type="HAMAP-Rule" id="MF_01576"/>
    </source>
</evidence>
<name>FOLD_BACCR</name>